<feature type="chain" id="PRO_0000178348" description="Small ribosomal subunit protein bS21">
    <location>
        <begin position="1"/>
        <end position="69"/>
    </location>
</feature>
<feature type="region of interest" description="Disordered" evidence="2">
    <location>
        <begin position="49"/>
        <end position="69"/>
    </location>
</feature>
<gene>
    <name evidence="1" type="primary">rpsU</name>
    <name type="ordered locus">LA_2229</name>
</gene>
<name>RS21_LEPIN</name>
<keyword id="KW-1185">Reference proteome</keyword>
<keyword id="KW-0687">Ribonucleoprotein</keyword>
<keyword id="KW-0689">Ribosomal protein</keyword>
<sequence length="69" mass="7973">MVGIIVKDGESIESALKRFKRDCANAGIMSEIKRREYFEKPSIKKKKAIESAKRKAEKKKRLFSKKDKA</sequence>
<accession>Q8F418</accession>
<organism>
    <name type="scientific">Leptospira interrogans serogroup Icterohaemorrhagiae serovar Lai (strain 56601)</name>
    <dbReference type="NCBI Taxonomy" id="189518"/>
    <lineage>
        <taxon>Bacteria</taxon>
        <taxon>Pseudomonadati</taxon>
        <taxon>Spirochaetota</taxon>
        <taxon>Spirochaetia</taxon>
        <taxon>Leptospirales</taxon>
        <taxon>Leptospiraceae</taxon>
        <taxon>Leptospira</taxon>
    </lineage>
</organism>
<reference key="1">
    <citation type="journal article" date="2003" name="Nature">
        <title>Unique physiological and pathogenic features of Leptospira interrogans revealed by whole-genome sequencing.</title>
        <authorList>
            <person name="Ren S.-X."/>
            <person name="Fu G."/>
            <person name="Jiang X.-G."/>
            <person name="Zeng R."/>
            <person name="Miao Y.-G."/>
            <person name="Xu H."/>
            <person name="Zhang Y.-X."/>
            <person name="Xiong H."/>
            <person name="Lu G."/>
            <person name="Lu L.-F."/>
            <person name="Jiang H.-Q."/>
            <person name="Jia J."/>
            <person name="Tu Y.-F."/>
            <person name="Jiang J.-X."/>
            <person name="Gu W.-Y."/>
            <person name="Zhang Y.-Q."/>
            <person name="Cai Z."/>
            <person name="Sheng H.-H."/>
            <person name="Yin H.-F."/>
            <person name="Zhang Y."/>
            <person name="Zhu G.-F."/>
            <person name="Wan M."/>
            <person name="Huang H.-L."/>
            <person name="Qian Z."/>
            <person name="Wang S.-Y."/>
            <person name="Ma W."/>
            <person name="Yao Z.-J."/>
            <person name="Shen Y."/>
            <person name="Qiang B.-Q."/>
            <person name="Xia Q.-C."/>
            <person name="Guo X.-K."/>
            <person name="Danchin A."/>
            <person name="Saint Girons I."/>
            <person name="Somerville R.L."/>
            <person name="Wen Y.-M."/>
            <person name="Shi M.-H."/>
            <person name="Chen Z."/>
            <person name="Xu J.-G."/>
            <person name="Zhao G.-P."/>
        </authorList>
    </citation>
    <scope>NUCLEOTIDE SEQUENCE [LARGE SCALE GENOMIC DNA]</scope>
    <source>
        <strain>56601</strain>
    </source>
</reference>
<dbReference type="EMBL" id="AE010300">
    <property type="protein sequence ID" value="AAN49428.2"/>
    <property type="molecule type" value="Genomic_DNA"/>
</dbReference>
<dbReference type="RefSeq" id="NP_712410.2">
    <property type="nucleotide sequence ID" value="NC_004342.2"/>
</dbReference>
<dbReference type="RefSeq" id="WP_000232823.1">
    <property type="nucleotide sequence ID" value="NC_004342.2"/>
</dbReference>
<dbReference type="SMR" id="Q8F418"/>
<dbReference type="FunCoup" id="Q8F418">
    <property type="interactions" value="418"/>
</dbReference>
<dbReference type="STRING" id="189518.LA_2229"/>
<dbReference type="PaxDb" id="189518-LA_2229"/>
<dbReference type="EnsemblBacteria" id="AAN49428">
    <property type="protein sequence ID" value="AAN49428"/>
    <property type="gene ID" value="LA_2229"/>
</dbReference>
<dbReference type="GeneID" id="61174136"/>
<dbReference type="KEGG" id="lil:LA_2229"/>
<dbReference type="PATRIC" id="fig|189518.3.peg.2218"/>
<dbReference type="HOGENOM" id="CLU_159258_1_2_12"/>
<dbReference type="InParanoid" id="Q8F418"/>
<dbReference type="OrthoDB" id="9799244at2"/>
<dbReference type="PRO" id="PR:Q8F418"/>
<dbReference type="Proteomes" id="UP000001408">
    <property type="component" value="Chromosome I"/>
</dbReference>
<dbReference type="GO" id="GO:1990904">
    <property type="term" value="C:ribonucleoprotein complex"/>
    <property type="evidence" value="ECO:0007669"/>
    <property type="project" value="UniProtKB-KW"/>
</dbReference>
<dbReference type="GO" id="GO:0005840">
    <property type="term" value="C:ribosome"/>
    <property type="evidence" value="ECO:0007669"/>
    <property type="project" value="UniProtKB-KW"/>
</dbReference>
<dbReference type="GO" id="GO:0003735">
    <property type="term" value="F:structural constituent of ribosome"/>
    <property type="evidence" value="ECO:0007669"/>
    <property type="project" value="InterPro"/>
</dbReference>
<dbReference type="GO" id="GO:0006412">
    <property type="term" value="P:translation"/>
    <property type="evidence" value="ECO:0007669"/>
    <property type="project" value="UniProtKB-UniRule"/>
</dbReference>
<dbReference type="Gene3D" id="1.20.5.1150">
    <property type="entry name" value="Ribosomal protein S8"/>
    <property type="match status" value="1"/>
</dbReference>
<dbReference type="HAMAP" id="MF_00358">
    <property type="entry name" value="Ribosomal_bS21"/>
    <property type="match status" value="1"/>
</dbReference>
<dbReference type="InterPro" id="IPR001911">
    <property type="entry name" value="Ribosomal_bS21"/>
</dbReference>
<dbReference type="InterPro" id="IPR038380">
    <property type="entry name" value="Ribosomal_bS21_sf"/>
</dbReference>
<dbReference type="NCBIfam" id="TIGR00030">
    <property type="entry name" value="S21p"/>
    <property type="match status" value="1"/>
</dbReference>
<dbReference type="PANTHER" id="PTHR21109">
    <property type="entry name" value="MITOCHONDRIAL 28S RIBOSOMAL PROTEIN S21"/>
    <property type="match status" value="1"/>
</dbReference>
<dbReference type="PANTHER" id="PTHR21109:SF22">
    <property type="entry name" value="SMALL RIBOSOMAL SUBUNIT PROTEIN BS21"/>
    <property type="match status" value="1"/>
</dbReference>
<dbReference type="Pfam" id="PF01165">
    <property type="entry name" value="Ribosomal_S21"/>
    <property type="match status" value="1"/>
</dbReference>
<dbReference type="PRINTS" id="PR00976">
    <property type="entry name" value="RIBOSOMALS21"/>
</dbReference>
<protein>
    <recommendedName>
        <fullName evidence="1">Small ribosomal subunit protein bS21</fullName>
    </recommendedName>
    <alternativeName>
        <fullName evidence="3">30S ribosomal protein S21</fullName>
    </alternativeName>
</protein>
<proteinExistence type="inferred from homology"/>
<comment type="similarity">
    <text evidence="1">Belongs to the bacterial ribosomal protein bS21 family.</text>
</comment>
<evidence type="ECO:0000255" key="1">
    <source>
        <dbReference type="HAMAP-Rule" id="MF_00358"/>
    </source>
</evidence>
<evidence type="ECO:0000256" key="2">
    <source>
        <dbReference type="SAM" id="MobiDB-lite"/>
    </source>
</evidence>
<evidence type="ECO:0000305" key="3"/>